<keyword id="KW-0012">Acyltransferase</keyword>
<keyword id="KW-0998">Cell outer membrane</keyword>
<keyword id="KW-0472">Membrane</keyword>
<keyword id="KW-1185">Reference proteome</keyword>
<keyword id="KW-0732">Signal</keyword>
<keyword id="KW-0808">Transferase</keyword>
<feature type="signal peptide" evidence="1">
    <location>
        <begin position="1"/>
        <end position="18"/>
    </location>
</feature>
<feature type="chain" id="PRO_0000414463" description="Lipid A acyltransferase PagP">
    <location>
        <begin position="19"/>
        <end position="190"/>
    </location>
</feature>
<feature type="active site" evidence="1">
    <location>
        <position position="60"/>
    </location>
</feature>
<feature type="active site" evidence="1">
    <location>
        <position position="103"/>
    </location>
</feature>
<feature type="active site" evidence="1">
    <location>
        <position position="104"/>
    </location>
</feature>
<feature type="site" description="Role in lipopolysaccharide recognition" evidence="1">
    <location>
        <position position="69"/>
    </location>
</feature>
<evidence type="ECO:0000255" key="1">
    <source>
        <dbReference type="HAMAP-Rule" id="MF_00837"/>
    </source>
</evidence>
<accession>Q5ZZI5</accession>
<protein>
    <recommendedName>
        <fullName evidence="1">Lipid A acyltransferase PagP</fullName>
        <ecNumber evidence="1">2.3.1.251</ecNumber>
    </recommendedName>
    <alternativeName>
        <fullName evidence="1">Lipid A acylation protein</fullName>
    </alternativeName>
</protein>
<gene>
    <name evidence="1" type="primary">pagP</name>
    <name type="ordered locus">lpg0025</name>
</gene>
<dbReference type="EC" id="2.3.1.251" evidence="1"/>
<dbReference type="EMBL" id="AE017354">
    <property type="protein sequence ID" value="AAU26133.1"/>
    <property type="molecule type" value="Genomic_DNA"/>
</dbReference>
<dbReference type="RefSeq" id="WP_010945787.1">
    <property type="nucleotide sequence ID" value="NC_002942.5"/>
</dbReference>
<dbReference type="RefSeq" id="YP_094080.1">
    <property type="nucleotide sequence ID" value="NC_002942.5"/>
</dbReference>
<dbReference type="SMR" id="Q5ZZI5"/>
<dbReference type="STRING" id="272624.lpg0025"/>
<dbReference type="PaxDb" id="272624-lpg0025"/>
<dbReference type="DNASU" id="3079151"/>
<dbReference type="GeneID" id="57034031"/>
<dbReference type="KEGG" id="lpn:lpg0025"/>
<dbReference type="PATRIC" id="fig|272624.6.peg.27"/>
<dbReference type="eggNOG" id="ENOG502Z7SY">
    <property type="taxonomic scope" value="Bacteria"/>
</dbReference>
<dbReference type="HOGENOM" id="CLU_104099_0_0_6"/>
<dbReference type="OrthoDB" id="9156803at2"/>
<dbReference type="Proteomes" id="UP000000609">
    <property type="component" value="Chromosome"/>
</dbReference>
<dbReference type="GO" id="GO:0009279">
    <property type="term" value="C:cell outer membrane"/>
    <property type="evidence" value="ECO:0007669"/>
    <property type="project" value="UniProtKB-SubCell"/>
</dbReference>
<dbReference type="GO" id="GO:0016746">
    <property type="term" value="F:acyltransferase activity"/>
    <property type="evidence" value="ECO:0007669"/>
    <property type="project" value="UniProtKB-UniRule"/>
</dbReference>
<dbReference type="GO" id="GO:0009245">
    <property type="term" value="P:lipid A biosynthetic process"/>
    <property type="evidence" value="ECO:0007669"/>
    <property type="project" value="UniProtKB-UniRule"/>
</dbReference>
<dbReference type="Gene3D" id="2.40.160.20">
    <property type="match status" value="1"/>
</dbReference>
<dbReference type="HAMAP" id="MF_00837">
    <property type="entry name" value="PagP_transferase"/>
    <property type="match status" value="1"/>
</dbReference>
<dbReference type="InterPro" id="IPR009746">
    <property type="entry name" value="LipidA_acyl_PagP"/>
</dbReference>
<dbReference type="InterPro" id="IPR011250">
    <property type="entry name" value="OMP/PagP_b-brl"/>
</dbReference>
<dbReference type="NCBIfam" id="NF008271">
    <property type="entry name" value="PRK11045.1"/>
    <property type="match status" value="1"/>
</dbReference>
<dbReference type="Pfam" id="PF07017">
    <property type="entry name" value="PagP"/>
    <property type="match status" value="1"/>
</dbReference>
<dbReference type="SUPFAM" id="SSF56925">
    <property type="entry name" value="OMPA-like"/>
    <property type="match status" value="1"/>
</dbReference>
<reference key="1">
    <citation type="journal article" date="2004" name="Science">
        <title>The genomic sequence of the accidental pathogen Legionella pneumophila.</title>
        <authorList>
            <person name="Chien M."/>
            <person name="Morozova I."/>
            <person name="Shi S."/>
            <person name="Sheng H."/>
            <person name="Chen J."/>
            <person name="Gomez S.M."/>
            <person name="Asamani G."/>
            <person name="Hill K."/>
            <person name="Nuara J."/>
            <person name="Feder M."/>
            <person name="Rineer J."/>
            <person name="Greenberg J.J."/>
            <person name="Steshenko V."/>
            <person name="Park S.H."/>
            <person name="Zhao B."/>
            <person name="Teplitskaya E."/>
            <person name="Edwards J.R."/>
            <person name="Pampou S."/>
            <person name="Georghiou A."/>
            <person name="Chou I.-C."/>
            <person name="Iannuccilli W."/>
            <person name="Ulz M.E."/>
            <person name="Kim D.H."/>
            <person name="Geringer-Sameth A."/>
            <person name="Goldsberry C."/>
            <person name="Morozov P."/>
            <person name="Fischer S.G."/>
            <person name="Segal G."/>
            <person name="Qu X."/>
            <person name="Rzhetsky A."/>
            <person name="Zhang P."/>
            <person name="Cayanis E."/>
            <person name="De Jong P.J."/>
            <person name="Ju J."/>
            <person name="Kalachikov S."/>
            <person name="Shuman H.A."/>
            <person name="Russo J.J."/>
        </authorList>
    </citation>
    <scope>NUCLEOTIDE SEQUENCE [LARGE SCALE GENOMIC DNA]</scope>
    <source>
        <strain>Philadelphia 1 / ATCC 33152 / DSM 7513</strain>
    </source>
</reference>
<proteinExistence type="inferred from homology"/>
<comment type="function">
    <text evidence="1">Transfers a fatty acid residue from the sn-1 position of a phospholipid to the N-linked hydroxyfatty acid chain on the proximal unit of lipid A or its precursors.</text>
</comment>
<comment type="catalytic activity">
    <reaction evidence="1">
        <text>a lipid A + a 1,2-diacyl-sn-glycero-3-phosphocholine = a hepta-acyl lipid A + a 2-acyl-sn-glycero-3-phosphocholine</text>
        <dbReference type="Rhea" id="RHEA:74275"/>
        <dbReference type="ChEBI" id="CHEBI:57643"/>
        <dbReference type="ChEBI" id="CHEBI:57875"/>
        <dbReference type="ChEBI" id="CHEBI:193141"/>
        <dbReference type="ChEBI" id="CHEBI:193142"/>
        <dbReference type="EC" id="2.3.1.251"/>
    </reaction>
</comment>
<comment type="catalytic activity">
    <reaction evidence="1">
        <text>a lipid IVA + a 1,2-diacyl-sn-glycero-3-phosphocholine = a lipid IVB + a 2-acyl-sn-glycero-3-phosphocholine</text>
        <dbReference type="Rhea" id="RHEA:74279"/>
        <dbReference type="ChEBI" id="CHEBI:57643"/>
        <dbReference type="ChEBI" id="CHEBI:57875"/>
        <dbReference type="ChEBI" id="CHEBI:176425"/>
        <dbReference type="ChEBI" id="CHEBI:193143"/>
        <dbReference type="EC" id="2.3.1.251"/>
    </reaction>
</comment>
<comment type="catalytic activity">
    <reaction evidence="1">
        <text>a lipid IIA + a 1,2-diacyl-sn-glycero-3-phosphocholine = a lipid IIB + a 2-acyl-sn-glycero-3-phosphocholine</text>
        <dbReference type="Rhea" id="RHEA:74283"/>
        <dbReference type="ChEBI" id="CHEBI:57643"/>
        <dbReference type="ChEBI" id="CHEBI:57875"/>
        <dbReference type="ChEBI" id="CHEBI:193144"/>
        <dbReference type="ChEBI" id="CHEBI:193145"/>
        <dbReference type="EC" id="2.3.1.251"/>
    </reaction>
</comment>
<comment type="subunit">
    <text evidence="1">Homodimer.</text>
</comment>
<comment type="subcellular location">
    <subcellularLocation>
        <location evidence="1">Cell outer membrane</location>
    </subcellularLocation>
</comment>
<comment type="similarity">
    <text evidence="1">Belongs to the lipid A palmitoyltransferase family.</text>
</comment>
<name>PAGP_LEGPH</name>
<sequence length="190" mass="21217">MKRLISCLTIICALNASAAAETTSNPCSRWISFLKPVCQRIHQTWTEGHDDMYFSGYAWHNRYVYSNEKIKSYNETAWGGGLGKSLFDEKGNWHGLYAIAFLDSHRHLEPAVGYAYLKTASVNKDLKAGLGYSVLVTSRVDYDNVPIPGALPWAALFYKRITIAATYIPGSSREGHENGNVLYMLGKISL</sequence>
<organism>
    <name type="scientific">Legionella pneumophila subsp. pneumophila (strain Philadelphia 1 / ATCC 33152 / DSM 7513)</name>
    <dbReference type="NCBI Taxonomy" id="272624"/>
    <lineage>
        <taxon>Bacteria</taxon>
        <taxon>Pseudomonadati</taxon>
        <taxon>Pseudomonadota</taxon>
        <taxon>Gammaproteobacteria</taxon>
        <taxon>Legionellales</taxon>
        <taxon>Legionellaceae</taxon>
        <taxon>Legionella</taxon>
    </lineage>
</organism>